<organism>
    <name type="scientific">Shewanella oneidensis (strain ATCC 700550 / JCM 31522 / CIP 106686 / LMG 19005 / NCIMB 14063 / MR-1)</name>
    <dbReference type="NCBI Taxonomy" id="211586"/>
    <lineage>
        <taxon>Bacteria</taxon>
        <taxon>Pseudomonadati</taxon>
        <taxon>Pseudomonadota</taxon>
        <taxon>Gammaproteobacteria</taxon>
        <taxon>Alteromonadales</taxon>
        <taxon>Shewanellaceae</taxon>
        <taxon>Shewanella</taxon>
    </lineage>
</organism>
<name>PSRP_SHEON</name>
<reference key="1">
    <citation type="journal article" date="2002" name="Nat. Biotechnol.">
        <title>Genome sequence of the dissimilatory metal ion-reducing bacterium Shewanella oneidensis.</title>
        <authorList>
            <person name="Heidelberg J.F."/>
            <person name="Paulsen I.T."/>
            <person name="Nelson K.E."/>
            <person name="Gaidos E.J."/>
            <person name="Nelson W.C."/>
            <person name="Read T.D."/>
            <person name="Eisen J.A."/>
            <person name="Seshadri R."/>
            <person name="Ward N.L."/>
            <person name="Methe B.A."/>
            <person name="Clayton R.A."/>
            <person name="Meyer T."/>
            <person name="Tsapin A."/>
            <person name="Scott J."/>
            <person name="Beanan M.J."/>
            <person name="Brinkac L.M."/>
            <person name="Daugherty S.C."/>
            <person name="DeBoy R.T."/>
            <person name="Dodson R.J."/>
            <person name="Durkin A.S."/>
            <person name="Haft D.H."/>
            <person name="Kolonay J.F."/>
            <person name="Madupu R."/>
            <person name="Peterson J.D."/>
            <person name="Umayam L.A."/>
            <person name="White O."/>
            <person name="Wolf A.M."/>
            <person name="Vamathevan J.J."/>
            <person name="Weidman J.F."/>
            <person name="Impraim M."/>
            <person name="Lee K."/>
            <person name="Berry K.J."/>
            <person name="Lee C."/>
            <person name="Mueller J."/>
            <person name="Khouri H.M."/>
            <person name="Gill J."/>
            <person name="Utterback T.R."/>
            <person name="McDonald L.A."/>
            <person name="Feldblyum T.V."/>
            <person name="Smith H.O."/>
            <person name="Venter J.C."/>
            <person name="Nealson K.H."/>
            <person name="Fraser C.M."/>
        </authorList>
    </citation>
    <scope>NUCLEOTIDE SEQUENCE [LARGE SCALE GENOMIC DNA]</scope>
    <source>
        <strain>ATCC 700550 / JCM 31522 / CIP 106686 / LMG 19005 / NCIMB 14063 / MR-1</strain>
    </source>
</reference>
<proteinExistence type="inferred from homology"/>
<feature type="chain" id="PRO_0000196709" description="Putative phosphoenolpyruvate synthase regulatory protein">
    <location>
        <begin position="1"/>
        <end position="270"/>
    </location>
</feature>
<feature type="binding site" evidence="1">
    <location>
        <begin position="150"/>
        <end position="157"/>
    </location>
    <ligand>
        <name>ADP</name>
        <dbReference type="ChEBI" id="CHEBI:456216"/>
    </ligand>
</feature>
<accession>Q8EDU8</accession>
<dbReference type="EC" id="2.7.11.33" evidence="1"/>
<dbReference type="EC" id="2.7.4.28" evidence="1"/>
<dbReference type="EMBL" id="AE014299">
    <property type="protein sequence ID" value="AAN55673.1"/>
    <property type="molecule type" value="Genomic_DNA"/>
</dbReference>
<dbReference type="RefSeq" id="NP_718229.1">
    <property type="nucleotide sequence ID" value="NC_004347.2"/>
</dbReference>
<dbReference type="RefSeq" id="WP_011072591.1">
    <property type="nucleotide sequence ID" value="NZ_CP053946.1"/>
</dbReference>
<dbReference type="SMR" id="Q8EDU8"/>
<dbReference type="STRING" id="211586.SO_2645"/>
<dbReference type="PaxDb" id="211586-SO_2645"/>
<dbReference type="KEGG" id="son:SO_2645"/>
<dbReference type="PATRIC" id="fig|211586.12.peg.2547"/>
<dbReference type="eggNOG" id="COG1806">
    <property type="taxonomic scope" value="Bacteria"/>
</dbReference>
<dbReference type="HOGENOM" id="CLU_046206_1_0_6"/>
<dbReference type="OrthoDB" id="9782201at2"/>
<dbReference type="PhylomeDB" id="Q8EDU8"/>
<dbReference type="BioCyc" id="SONE211586:G1GMP-2429-MONOMER"/>
<dbReference type="Proteomes" id="UP000008186">
    <property type="component" value="Chromosome"/>
</dbReference>
<dbReference type="GO" id="GO:0043531">
    <property type="term" value="F:ADP binding"/>
    <property type="evidence" value="ECO:0007669"/>
    <property type="project" value="UniProtKB-UniRule"/>
</dbReference>
<dbReference type="GO" id="GO:0005524">
    <property type="term" value="F:ATP binding"/>
    <property type="evidence" value="ECO:0007669"/>
    <property type="project" value="InterPro"/>
</dbReference>
<dbReference type="GO" id="GO:0016776">
    <property type="term" value="F:phosphotransferase activity, phosphate group as acceptor"/>
    <property type="evidence" value="ECO:0007669"/>
    <property type="project" value="UniProtKB-UniRule"/>
</dbReference>
<dbReference type="GO" id="GO:0004674">
    <property type="term" value="F:protein serine/threonine kinase activity"/>
    <property type="evidence" value="ECO:0007669"/>
    <property type="project" value="UniProtKB-UniRule"/>
</dbReference>
<dbReference type="HAMAP" id="MF_01062">
    <property type="entry name" value="PSRP"/>
    <property type="match status" value="1"/>
</dbReference>
<dbReference type="InterPro" id="IPR005177">
    <property type="entry name" value="Kinase-pyrophosphorylase"/>
</dbReference>
<dbReference type="InterPro" id="IPR026530">
    <property type="entry name" value="PSRP"/>
</dbReference>
<dbReference type="NCBIfam" id="NF003742">
    <property type="entry name" value="PRK05339.1"/>
    <property type="match status" value="1"/>
</dbReference>
<dbReference type="PANTHER" id="PTHR31756">
    <property type="entry name" value="PYRUVATE, PHOSPHATE DIKINASE REGULATORY PROTEIN 1, CHLOROPLASTIC"/>
    <property type="match status" value="1"/>
</dbReference>
<dbReference type="PANTHER" id="PTHR31756:SF3">
    <property type="entry name" value="PYRUVATE, PHOSPHATE DIKINASE REGULATORY PROTEIN 1, CHLOROPLASTIC"/>
    <property type="match status" value="1"/>
</dbReference>
<dbReference type="Pfam" id="PF03618">
    <property type="entry name" value="Kinase-PPPase"/>
    <property type="match status" value="1"/>
</dbReference>
<comment type="function">
    <text evidence="1">Bifunctional serine/threonine kinase and phosphorylase involved in the regulation of the phosphoenolpyruvate synthase (PEPS) by catalyzing its phosphorylation/dephosphorylation.</text>
</comment>
<comment type="catalytic activity">
    <reaction evidence="1">
        <text>[pyruvate, water dikinase] + ADP = [pyruvate, water dikinase]-phosphate + AMP + H(+)</text>
        <dbReference type="Rhea" id="RHEA:46020"/>
        <dbReference type="Rhea" id="RHEA-COMP:11425"/>
        <dbReference type="Rhea" id="RHEA-COMP:11426"/>
        <dbReference type="ChEBI" id="CHEBI:15378"/>
        <dbReference type="ChEBI" id="CHEBI:43176"/>
        <dbReference type="ChEBI" id="CHEBI:68546"/>
        <dbReference type="ChEBI" id="CHEBI:456215"/>
        <dbReference type="ChEBI" id="CHEBI:456216"/>
        <dbReference type="EC" id="2.7.11.33"/>
    </reaction>
</comment>
<comment type="catalytic activity">
    <reaction evidence="1">
        <text>[pyruvate, water dikinase]-phosphate + phosphate + H(+) = [pyruvate, water dikinase] + diphosphate</text>
        <dbReference type="Rhea" id="RHEA:48580"/>
        <dbReference type="Rhea" id="RHEA-COMP:11425"/>
        <dbReference type="Rhea" id="RHEA-COMP:11426"/>
        <dbReference type="ChEBI" id="CHEBI:15378"/>
        <dbReference type="ChEBI" id="CHEBI:33019"/>
        <dbReference type="ChEBI" id="CHEBI:43176"/>
        <dbReference type="ChEBI" id="CHEBI:43474"/>
        <dbReference type="ChEBI" id="CHEBI:68546"/>
        <dbReference type="EC" id="2.7.4.28"/>
    </reaction>
</comment>
<comment type="similarity">
    <text evidence="1">Belongs to the pyruvate, phosphate/water dikinase regulatory protein family. PSRP subfamily.</text>
</comment>
<keyword id="KW-0418">Kinase</keyword>
<keyword id="KW-0547">Nucleotide-binding</keyword>
<keyword id="KW-1185">Reference proteome</keyword>
<keyword id="KW-0723">Serine/threonine-protein kinase</keyword>
<keyword id="KW-0808">Transferase</keyword>
<protein>
    <recommendedName>
        <fullName evidence="1">Putative phosphoenolpyruvate synthase regulatory protein</fullName>
        <shortName evidence="1">PEP synthase regulatory protein</shortName>
        <shortName evidence="1">PSRP</shortName>
        <ecNumber evidence="1">2.7.11.33</ecNumber>
        <ecNumber evidence="1">2.7.4.28</ecNumber>
    </recommendedName>
    <alternativeName>
        <fullName evidence="1">Pyruvate, water dikinase regulatory protein</fullName>
    </alternativeName>
</protein>
<sequence length="270" mass="30763">MAPKVFYISDGTAITAEVFGHAVLSQFPLEFESLTIPFVETLAKAENVKRQINDCFITTGERPLVFHSIVKPEIRDIIYSSEGLDYDFLNTFVAPLEQHLGVSASPVLHRTHGKANQGYEARIDAINFAMDNDDGQTMKHMDQADLILLGVSRCGKTPSSLYLSMQFGIKAANYPFTEDDMDNLKLPEALKRNKKKLFGLTIDPVRLHEIRQSRMENSRYSSLKQCRLEVKEVEMMFKRERIPYIDTTNHSVEEIATKILDVTGLERHMF</sequence>
<evidence type="ECO:0000255" key="1">
    <source>
        <dbReference type="HAMAP-Rule" id="MF_01062"/>
    </source>
</evidence>
<gene>
    <name type="ordered locus">SO_2645</name>
</gene>